<comment type="function">
    <text evidence="1">Catalyzes the NADPH-dependent reduction of L-glutamate 5-phosphate into L-glutamate 5-semialdehyde and phosphate. The product spontaneously undergoes cyclization to form 1-pyrroline-5-carboxylate.</text>
</comment>
<comment type="catalytic activity">
    <reaction evidence="1">
        <text>L-glutamate 5-semialdehyde + phosphate + NADP(+) = L-glutamyl 5-phosphate + NADPH + H(+)</text>
        <dbReference type="Rhea" id="RHEA:19541"/>
        <dbReference type="ChEBI" id="CHEBI:15378"/>
        <dbReference type="ChEBI" id="CHEBI:43474"/>
        <dbReference type="ChEBI" id="CHEBI:57783"/>
        <dbReference type="ChEBI" id="CHEBI:58066"/>
        <dbReference type="ChEBI" id="CHEBI:58274"/>
        <dbReference type="ChEBI" id="CHEBI:58349"/>
        <dbReference type="EC" id="1.2.1.41"/>
    </reaction>
</comment>
<comment type="pathway">
    <text evidence="1">Amino-acid biosynthesis; L-proline biosynthesis; L-glutamate 5-semialdehyde from L-glutamate: step 2/2.</text>
</comment>
<comment type="subcellular location">
    <subcellularLocation>
        <location evidence="1">Cytoplasm</location>
    </subcellularLocation>
</comment>
<comment type="similarity">
    <text evidence="1">Belongs to the gamma-glutamyl phosphate reductase family.</text>
</comment>
<comment type="sequence caution" evidence="2">
    <conflict type="erroneous initiation">
        <sequence resource="EMBL-CDS" id="BAB73865"/>
    </conflict>
</comment>
<evidence type="ECO:0000255" key="1">
    <source>
        <dbReference type="HAMAP-Rule" id="MF_00412"/>
    </source>
</evidence>
<evidence type="ECO:0000305" key="2"/>
<dbReference type="EC" id="1.2.1.41" evidence="1"/>
<dbReference type="EMBL" id="BA000019">
    <property type="protein sequence ID" value="BAB73865.1"/>
    <property type="status" value="ALT_INIT"/>
    <property type="molecule type" value="Genomic_DNA"/>
</dbReference>
<dbReference type="PIR" id="AH2076">
    <property type="entry name" value="AH2076"/>
</dbReference>
<dbReference type="RefSeq" id="WP_044522932.1">
    <property type="nucleotide sequence ID" value="NZ_RSCN01000004.1"/>
</dbReference>
<dbReference type="SMR" id="Q8YV15"/>
<dbReference type="STRING" id="103690.gene:10494195"/>
<dbReference type="KEGG" id="ana:all2166"/>
<dbReference type="eggNOG" id="COG0014">
    <property type="taxonomic scope" value="Bacteria"/>
</dbReference>
<dbReference type="OrthoDB" id="9809970at2"/>
<dbReference type="UniPathway" id="UPA00098">
    <property type="reaction ID" value="UER00360"/>
</dbReference>
<dbReference type="Proteomes" id="UP000002483">
    <property type="component" value="Chromosome"/>
</dbReference>
<dbReference type="GO" id="GO:0005737">
    <property type="term" value="C:cytoplasm"/>
    <property type="evidence" value="ECO:0007669"/>
    <property type="project" value="UniProtKB-SubCell"/>
</dbReference>
<dbReference type="GO" id="GO:0004350">
    <property type="term" value="F:glutamate-5-semialdehyde dehydrogenase activity"/>
    <property type="evidence" value="ECO:0007669"/>
    <property type="project" value="UniProtKB-UniRule"/>
</dbReference>
<dbReference type="GO" id="GO:0050661">
    <property type="term" value="F:NADP binding"/>
    <property type="evidence" value="ECO:0007669"/>
    <property type="project" value="InterPro"/>
</dbReference>
<dbReference type="GO" id="GO:0055129">
    <property type="term" value="P:L-proline biosynthetic process"/>
    <property type="evidence" value="ECO:0007669"/>
    <property type="project" value="UniProtKB-UniRule"/>
</dbReference>
<dbReference type="CDD" id="cd07079">
    <property type="entry name" value="ALDH_F18-19_ProA-GPR"/>
    <property type="match status" value="1"/>
</dbReference>
<dbReference type="FunFam" id="3.40.309.10:FF:000006">
    <property type="entry name" value="Gamma-glutamyl phosphate reductase"/>
    <property type="match status" value="1"/>
</dbReference>
<dbReference type="Gene3D" id="3.40.605.10">
    <property type="entry name" value="Aldehyde Dehydrogenase, Chain A, domain 1"/>
    <property type="match status" value="1"/>
</dbReference>
<dbReference type="Gene3D" id="3.40.309.10">
    <property type="entry name" value="Aldehyde Dehydrogenase, Chain A, domain 2"/>
    <property type="match status" value="1"/>
</dbReference>
<dbReference type="HAMAP" id="MF_00412">
    <property type="entry name" value="ProA"/>
    <property type="match status" value="1"/>
</dbReference>
<dbReference type="InterPro" id="IPR016161">
    <property type="entry name" value="Ald_DH/histidinol_DH"/>
</dbReference>
<dbReference type="InterPro" id="IPR016163">
    <property type="entry name" value="Ald_DH_C"/>
</dbReference>
<dbReference type="InterPro" id="IPR016162">
    <property type="entry name" value="Ald_DH_N"/>
</dbReference>
<dbReference type="InterPro" id="IPR015590">
    <property type="entry name" value="Aldehyde_DH_dom"/>
</dbReference>
<dbReference type="InterPro" id="IPR020593">
    <property type="entry name" value="G-glutamylP_reductase_CS"/>
</dbReference>
<dbReference type="InterPro" id="IPR012134">
    <property type="entry name" value="Glu-5-SA_DH"/>
</dbReference>
<dbReference type="InterPro" id="IPR000965">
    <property type="entry name" value="GPR_dom"/>
</dbReference>
<dbReference type="NCBIfam" id="NF001221">
    <property type="entry name" value="PRK00197.1"/>
    <property type="match status" value="1"/>
</dbReference>
<dbReference type="NCBIfam" id="TIGR00407">
    <property type="entry name" value="proA"/>
    <property type="match status" value="1"/>
</dbReference>
<dbReference type="PANTHER" id="PTHR11063:SF8">
    <property type="entry name" value="DELTA-1-PYRROLINE-5-CARBOXYLATE SYNTHASE"/>
    <property type="match status" value="1"/>
</dbReference>
<dbReference type="PANTHER" id="PTHR11063">
    <property type="entry name" value="GLUTAMATE SEMIALDEHYDE DEHYDROGENASE"/>
    <property type="match status" value="1"/>
</dbReference>
<dbReference type="Pfam" id="PF00171">
    <property type="entry name" value="Aldedh"/>
    <property type="match status" value="1"/>
</dbReference>
<dbReference type="PIRSF" id="PIRSF000151">
    <property type="entry name" value="GPR"/>
    <property type="match status" value="1"/>
</dbReference>
<dbReference type="SUPFAM" id="SSF53720">
    <property type="entry name" value="ALDH-like"/>
    <property type="match status" value="1"/>
</dbReference>
<dbReference type="PROSITE" id="PS01223">
    <property type="entry name" value="PROA"/>
    <property type="match status" value="1"/>
</dbReference>
<name>PROA_NOSS1</name>
<reference key="1">
    <citation type="journal article" date="2001" name="DNA Res.">
        <title>Complete genomic sequence of the filamentous nitrogen-fixing cyanobacterium Anabaena sp. strain PCC 7120.</title>
        <authorList>
            <person name="Kaneko T."/>
            <person name="Nakamura Y."/>
            <person name="Wolk C.P."/>
            <person name="Kuritz T."/>
            <person name="Sasamoto S."/>
            <person name="Watanabe A."/>
            <person name="Iriguchi M."/>
            <person name="Ishikawa A."/>
            <person name="Kawashima K."/>
            <person name="Kimura T."/>
            <person name="Kishida Y."/>
            <person name="Kohara M."/>
            <person name="Matsumoto M."/>
            <person name="Matsuno A."/>
            <person name="Muraki A."/>
            <person name="Nakazaki N."/>
            <person name="Shimpo S."/>
            <person name="Sugimoto M."/>
            <person name="Takazawa M."/>
            <person name="Yamada M."/>
            <person name="Yasuda M."/>
            <person name="Tabata S."/>
        </authorList>
    </citation>
    <scope>NUCLEOTIDE SEQUENCE [LARGE SCALE GENOMIC DNA]</scope>
    <source>
        <strain>PCC 7120 / SAG 25.82 / UTEX 2576</strain>
    </source>
</reference>
<feature type="chain" id="PRO_0000189683" description="Gamma-glutamyl phosphate reductase">
    <location>
        <begin position="1"/>
        <end position="434"/>
    </location>
</feature>
<protein>
    <recommendedName>
        <fullName evidence="1">Gamma-glutamyl phosphate reductase</fullName>
        <shortName evidence="1">GPR</shortName>
        <ecNumber evidence="1">1.2.1.41</ecNumber>
    </recommendedName>
    <alternativeName>
        <fullName evidence="1">Glutamate-5-semialdehyde dehydrogenase</fullName>
    </alternativeName>
    <alternativeName>
        <fullName evidence="1">Glutamyl-gamma-semialdehyde dehydrogenase</fullName>
        <shortName evidence="1">GSA dehydrogenase</shortName>
    </alternativeName>
</protein>
<proteinExistence type="inferred from homology"/>
<keyword id="KW-0028">Amino-acid biosynthesis</keyword>
<keyword id="KW-0963">Cytoplasm</keyword>
<keyword id="KW-0521">NADP</keyword>
<keyword id="KW-0560">Oxidoreductase</keyword>
<keyword id="KW-0641">Proline biosynthesis</keyword>
<keyword id="KW-1185">Reference proteome</keyword>
<gene>
    <name evidence="1" type="primary">proA</name>
    <name type="ordered locus">all2166</name>
</gene>
<sequence>MTTLQVASSLNDIAQQTRQAASLLAMLSTEAKNQAIAAVAQALESAKEEILQANIDDCEAATAEGIAKPLYKRLQLDEHKLRDAIAGVRDVGKLADPIGQVQIQRELDTGLVLKRITCPLGVLGIIFEARPEAAIQIISLAIKSGNGVILKCGKEAVRSCEAIVKAVKQGLSTTDVNPEVVQLLTTREETLELLRLDKYVDLIIPRGSNSFVRFVQENTRIPVLGHADGICHVYIDKSADIEKAIAVSVDAKVQYPAACNAIETLLVHQSIAAEFLPKVAQALAEREVELKGDERTLQILPEIAAATAIDWETEYSDFILSIKIVDSLTEAIAHINQYGSRHTDAIITEDVAAVKTFFGLVNSAGVFHNCSTRFADGFRYGFGAEVGISTQQMPPRGPVGLEGLVTYKYQMTGAGHIVATYTGENAKPFTHKDF</sequence>
<accession>Q8YV15</accession>
<organism>
    <name type="scientific">Nostoc sp. (strain PCC 7120 / SAG 25.82 / UTEX 2576)</name>
    <dbReference type="NCBI Taxonomy" id="103690"/>
    <lineage>
        <taxon>Bacteria</taxon>
        <taxon>Bacillati</taxon>
        <taxon>Cyanobacteriota</taxon>
        <taxon>Cyanophyceae</taxon>
        <taxon>Nostocales</taxon>
        <taxon>Nostocaceae</taxon>
        <taxon>Nostoc</taxon>
    </lineage>
</organism>